<comment type="function">
    <text evidence="1">Enables the bacterium to metabolize sucrose as a sole carbon source.</text>
</comment>
<comment type="catalytic activity">
    <reaction evidence="2">
        <text>Hydrolysis of terminal non-reducing beta-D-fructofuranoside residues in beta-D-fructofuranosides.</text>
        <dbReference type="EC" id="3.2.1.26"/>
    </reaction>
</comment>
<comment type="pathway">
    <text>Glycan biosynthesis; sucrose metabolism.</text>
</comment>
<comment type="subcellular location">
    <subcellularLocation>
        <location evidence="1">Cytoplasm</location>
    </subcellularLocation>
</comment>
<comment type="similarity">
    <text evidence="3">Belongs to the glycosyl hydrolase 32 family.</text>
</comment>
<accession>Q56660</accession>
<sequence>MLLDTQLELAGGINNVTRILAPQGQVVLALKHPPHAPHLPDDVSLQSVLGEWQLSVQRTAEVSDQQLATIGKAISERQKLETLPYQTALDCPYRPLWHISPPQGLLNDPNGFIYHQGEYHLFYQWHPFVCEHKDKYWVHLKSLDLVHWQWQSVALTPSDWFDSHGVFSGHAVSHQQDLWLFYTGNTRLGVDRQRQTMQCAARMNANGEFEKLGPVIRCLPEGVTEHIRDPKVIYTQGKWHMLLGAQTLAHQGRLAVYHSDDLLHWHFDKLYGDELGNYGYMWECPDWFELQGEAFFVFGPQGIASANPHHTIEHQNRIFRATQNAQGEIALLQGWPLDEGFDFYAPQTAQTTDGRRVLCGWMGLPDETQHPSCDQGWIHQLTALRELEWREGKIYQHPLRELDTLRSEPHTLLLSDTVTELKAKSFDVQVTLPWGCQLRLMQNAQYCVTLTLDAENRLLRLDRSATQIRQGDTIRELKLDSPTVELRILADQSSLEIFINQGEHVMTSRIFTPLDATGISLHGASVDAKLYYMAPASAPFNLEVNV</sequence>
<feature type="chain" id="PRO_0000341298" description="Probable sucrose-6-phosphate hydrolase">
    <location>
        <begin position="1"/>
        <end position="546"/>
    </location>
</feature>
<feature type="active site" evidence="2">
    <location>
        <position position="108"/>
    </location>
</feature>
<feature type="binding site" evidence="1">
    <location>
        <begin position="105"/>
        <end position="108"/>
    </location>
    <ligand>
        <name>substrate</name>
    </ligand>
</feature>
<feature type="binding site" evidence="1">
    <location>
        <position position="124"/>
    </location>
    <ligand>
        <name>substrate</name>
    </ligand>
</feature>
<feature type="binding site" evidence="1">
    <location>
        <begin position="167"/>
        <end position="168"/>
    </location>
    <ligand>
        <name>substrate</name>
    </ligand>
</feature>
<feature type="binding site" evidence="1">
    <location>
        <begin position="228"/>
        <end position="229"/>
    </location>
    <ligand>
        <name>substrate</name>
    </ligand>
</feature>
<feature type="binding site" evidence="1">
    <location>
        <position position="283"/>
    </location>
    <ligand>
        <name>substrate</name>
    </ligand>
</feature>
<proteinExistence type="inferred from homology"/>
<dbReference type="EC" id="3.2.1.26"/>
<dbReference type="EMBL" id="M74035">
    <property type="protein sequence ID" value="AAA27560.1"/>
    <property type="molecule type" value="Genomic_DNA"/>
</dbReference>
<dbReference type="SMR" id="Q56660"/>
<dbReference type="CAZy" id="GH32">
    <property type="family name" value="Glycoside Hydrolase Family 32"/>
</dbReference>
<dbReference type="UniPathway" id="UPA00238"/>
<dbReference type="GO" id="GO:0005737">
    <property type="term" value="C:cytoplasm"/>
    <property type="evidence" value="ECO:0007669"/>
    <property type="project" value="UniProtKB-SubCell"/>
</dbReference>
<dbReference type="GO" id="GO:0004564">
    <property type="term" value="F:beta-fructofuranosidase activity"/>
    <property type="evidence" value="ECO:0007669"/>
    <property type="project" value="UniProtKB-EC"/>
</dbReference>
<dbReference type="GO" id="GO:0005985">
    <property type="term" value="P:sucrose metabolic process"/>
    <property type="evidence" value="ECO:0007669"/>
    <property type="project" value="UniProtKB-UniPathway"/>
</dbReference>
<dbReference type="CDD" id="cd18623">
    <property type="entry name" value="GH32_ScrB-like"/>
    <property type="match status" value="1"/>
</dbReference>
<dbReference type="Gene3D" id="2.60.120.560">
    <property type="entry name" value="Exo-inulinase, domain 1"/>
    <property type="match status" value="1"/>
</dbReference>
<dbReference type="Gene3D" id="2.115.10.20">
    <property type="entry name" value="Glycosyl hydrolase domain, family 43"/>
    <property type="match status" value="1"/>
</dbReference>
<dbReference type="InterPro" id="IPR013320">
    <property type="entry name" value="ConA-like_dom_sf"/>
</dbReference>
<dbReference type="InterPro" id="IPR051214">
    <property type="entry name" value="GH32_Enzymes"/>
</dbReference>
<dbReference type="InterPro" id="IPR001362">
    <property type="entry name" value="Glyco_hydro_32"/>
</dbReference>
<dbReference type="InterPro" id="IPR018053">
    <property type="entry name" value="Glyco_hydro_32_AS"/>
</dbReference>
<dbReference type="InterPro" id="IPR013189">
    <property type="entry name" value="Glyco_hydro_32_C"/>
</dbReference>
<dbReference type="InterPro" id="IPR013148">
    <property type="entry name" value="Glyco_hydro_32_N"/>
</dbReference>
<dbReference type="InterPro" id="IPR023296">
    <property type="entry name" value="Glyco_hydro_beta-prop_sf"/>
</dbReference>
<dbReference type="InterPro" id="IPR006232">
    <property type="entry name" value="Suc6P_hydrolase"/>
</dbReference>
<dbReference type="NCBIfam" id="TIGR01322">
    <property type="entry name" value="scrB_fam"/>
    <property type="match status" value="1"/>
</dbReference>
<dbReference type="PANTHER" id="PTHR43101">
    <property type="entry name" value="BETA-FRUCTOSIDASE"/>
    <property type="match status" value="1"/>
</dbReference>
<dbReference type="PANTHER" id="PTHR43101:SF1">
    <property type="entry name" value="BETA-FRUCTOSIDASE"/>
    <property type="match status" value="1"/>
</dbReference>
<dbReference type="Pfam" id="PF08244">
    <property type="entry name" value="Glyco_hydro_32C"/>
    <property type="match status" value="1"/>
</dbReference>
<dbReference type="Pfam" id="PF00251">
    <property type="entry name" value="Glyco_hydro_32N"/>
    <property type="match status" value="1"/>
</dbReference>
<dbReference type="SMART" id="SM00640">
    <property type="entry name" value="Glyco_32"/>
    <property type="match status" value="1"/>
</dbReference>
<dbReference type="SUPFAM" id="SSF75005">
    <property type="entry name" value="Arabinanase/levansucrase/invertase"/>
    <property type="match status" value="1"/>
</dbReference>
<dbReference type="SUPFAM" id="SSF49899">
    <property type="entry name" value="Concanavalin A-like lectins/glucanases"/>
    <property type="match status" value="1"/>
</dbReference>
<dbReference type="PROSITE" id="PS00609">
    <property type="entry name" value="GLYCOSYL_HYDROL_F32"/>
    <property type="match status" value="1"/>
</dbReference>
<name>SCRB_VIBCL</name>
<reference key="1">
    <citation type="submission" date="1992-02" db="EMBL/GenBank/DDBJ databases">
        <authorList>
            <person name="Chon S.Y."/>
        </authorList>
    </citation>
    <scope>NUCLEOTIDE SEQUENCE [GENOMIC DNA]</scope>
    <source>
        <strain>BV6</strain>
    </source>
</reference>
<evidence type="ECO:0000250" key="1"/>
<evidence type="ECO:0000255" key="2">
    <source>
        <dbReference type="PROSITE-ProRule" id="PRU10067"/>
    </source>
</evidence>
<evidence type="ECO:0000305" key="3"/>
<keyword id="KW-0963">Cytoplasm</keyword>
<keyword id="KW-0326">Glycosidase</keyword>
<keyword id="KW-0378">Hydrolase</keyword>
<organism>
    <name type="scientific">Vibrio cholerae</name>
    <dbReference type="NCBI Taxonomy" id="666"/>
    <lineage>
        <taxon>Bacteria</taxon>
        <taxon>Pseudomonadati</taxon>
        <taxon>Pseudomonadota</taxon>
        <taxon>Gammaproteobacteria</taxon>
        <taxon>Vibrionales</taxon>
        <taxon>Vibrionaceae</taxon>
        <taxon>Vibrio</taxon>
    </lineage>
</organism>
<protein>
    <recommendedName>
        <fullName>Probable sucrose-6-phosphate hydrolase</fullName>
        <shortName>Sucrase</shortName>
        <ecNumber>3.2.1.26</ecNumber>
    </recommendedName>
    <alternativeName>
        <fullName>Invertase</fullName>
    </alternativeName>
</protein>